<name>ZGPAT_BOVIN</name>
<feature type="chain" id="PRO_0000385190" description="Zinc finger CCCH-type with G patch domain-containing protein">
    <location>
        <begin position="1"/>
        <end position="513"/>
    </location>
</feature>
<feature type="domain" description="G-patch" evidence="4">
    <location>
        <begin position="315"/>
        <end position="361"/>
    </location>
</feature>
<feature type="zinc finger region" description="C3H1-type" evidence="5">
    <location>
        <begin position="176"/>
        <end position="202"/>
    </location>
</feature>
<feature type="region of interest" description="Disordered" evidence="6">
    <location>
        <begin position="90"/>
        <end position="131"/>
    </location>
</feature>
<feature type="region of interest" description="Disordered" evidence="6">
    <location>
        <begin position="267"/>
        <end position="296"/>
    </location>
</feature>
<feature type="region of interest" description="Disordered" evidence="6">
    <location>
        <begin position="367"/>
        <end position="394"/>
    </location>
</feature>
<feature type="region of interest" description="Disordered" evidence="6">
    <location>
        <begin position="492"/>
        <end position="513"/>
    </location>
</feature>
<feature type="compositionally biased region" description="Acidic residues" evidence="6">
    <location>
        <begin position="116"/>
        <end position="126"/>
    </location>
</feature>
<feature type="compositionally biased region" description="Basic and acidic residues" evidence="6">
    <location>
        <begin position="497"/>
        <end position="513"/>
    </location>
</feature>
<feature type="modified residue" description="N-acetylmethionine" evidence="2">
    <location>
        <position position="1"/>
    </location>
</feature>
<feature type="modified residue" description="Phosphoserine" evidence="3">
    <location>
        <position position="278"/>
    </location>
</feature>
<feature type="modified residue" description="Phosphoserine" evidence="3">
    <location>
        <position position="355"/>
    </location>
</feature>
<proteinExistence type="evidence at transcript level"/>
<protein>
    <recommendedName>
        <fullName>Zinc finger CCCH-type with G patch domain-containing protein</fullName>
    </recommendedName>
</protein>
<accession>Q17QX2</accession>
<keyword id="KW-0007">Acetylation</keyword>
<keyword id="KW-0238">DNA-binding</keyword>
<keyword id="KW-0479">Metal-binding</keyword>
<keyword id="KW-0539">Nucleus</keyword>
<keyword id="KW-0597">Phosphoprotein</keyword>
<keyword id="KW-1185">Reference proteome</keyword>
<keyword id="KW-0678">Repressor</keyword>
<keyword id="KW-0804">Transcription</keyword>
<keyword id="KW-0805">Transcription regulation</keyword>
<keyword id="KW-0862">Zinc</keyword>
<keyword id="KW-0863">Zinc-finger</keyword>
<sequence length="513" mass="55285">MDEESLQTALRTYDAQLQQVELALGAGLDPSELADLRQLQGDLKELIELTEASLVSVRKSKLLAALDGERPAQEDAEPLALQNAIAETAEVPVAPGAELETVPSRETGPGPTERGQEEDDGEDEEGGAALSGRKVNAPYYSAWGTLEYHNAMIVGTEEADDGSPGVRVLYLYPTHKSLKPCSFFLEGKCRFQENCRFSHGQVVSVDELRPFQDPDLSSLQAGSACLAKRQDGLWYPARITDVDSGYYTVKFDSLLLKETVVEGDSILPPLRTEPAGSSDSDGSDADDPSYARVVEPGAANPGTCSSAFAGWEVHTRGIGSRLLAKMGYEFGKGLGRHAEGRVEPVHAVVLPRGKSLDQCAEILQKRTRAGQAGVSKPPKCRSRGSGPGGRPPPRSVFDFLNEKLKGGAPGAPEVGAAPPGRSGKEVYHASRSTKRALSLRLLQTEEKIEQTQRAIRGIQEALARNAGRHSVTTAQLQEKLAGAQQQLGQLRAQEAGLQREQRKADTHKKMTEF</sequence>
<dbReference type="EMBL" id="BC118131">
    <property type="protein sequence ID" value="AAI18132.1"/>
    <property type="molecule type" value="mRNA"/>
</dbReference>
<dbReference type="RefSeq" id="NP_001019685.2">
    <property type="nucleotide sequence ID" value="NM_001024514.2"/>
</dbReference>
<dbReference type="RefSeq" id="XP_010809737.1">
    <property type="nucleotide sequence ID" value="XM_010811435.3"/>
</dbReference>
<dbReference type="SMR" id="Q17QX2"/>
<dbReference type="FunCoup" id="Q17QX2">
    <property type="interactions" value="3779"/>
</dbReference>
<dbReference type="STRING" id="9913.ENSBTAP00000009860"/>
<dbReference type="PaxDb" id="9913-ENSBTAP00000042610"/>
<dbReference type="GeneID" id="510866"/>
<dbReference type="KEGG" id="bta:510866"/>
<dbReference type="CTD" id="84619"/>
<dbReference type="VEuPathDB" id="HostDB:ENSBTAG00000007498"/>
<dbReference type="eggNOG" id="KOG2185">
    <property type="taxonomic scope" value="Eukaryota"/>
</dbReference>
<dbReference type="HOGENOM" id="CLU_040504_1_0_1"/>
<dbReference type="InParanoid" id="Q17QX2"/>
<dbReference type="OMA" id="QYTRGIG"/>
<dbReference type="OrthoDB" id="4822at2759"/>
<dbReference type="TreeFam" id="TF105970"/>
<dbReference type="Proteomes" id="UP000009136">
    <property type="component" value="Chromosome 13"/>
</dbReference>
<dbReference type="Bgee" id="ENSBTAG00000007498">
    <property type="expression patterns" value="Expressed in ileocecal valve and 104 other cell types or tissues"/>
</dbReference>
<dbReference type="GO" id="GO:0005634">
    <property type="term" value="C:nucleus"/>
    <property type="evidence" value="ECO:0000250"/>
    <property type="project" value="UniProtKB"/>
</dbReference>
<dbReference type="GO" id="GO:0003700">
    <property type="term" value="F:DNA-binding transcription factor activity"/>
    <property type="evidence" value="ECO:0000250"/>
    <property type="project" value="UniProtKB"/>
</dbReference>
<dbReference type="GO" id="GO:0001227">
    <property type="term" value="F:DNA-binding transcription repressor activity, RNA polymerase II-specific"/>
    <property type="evidence" value="ECO:0000318"/>
    <property type="project" value="GO_Central"/>
</dbReference>
<dbReference type="GO" id="GO:0000978">
    <property type="term" value="F:RNA polymerase II cis-regulatory region sequence-specific DNA binding"/>
    <property type="evidence" value="ECO:0000318"/>
    <property type="project" value="GO_Central"/>
</dbReference>
<dbReference type="GO" id="GO:0043565">
    <property type="term" value="F:sequence-specific DNA binding"/>
    <property type="evidence" value="ECO:0000250"/>
    <property type="project" value="UniProtKB"/>
</dbReference>
<dbReference type="GO" id="GO:0008270">
    <property type="term" value="F:zinc ion binding"/>
    <property type="evidence" value="ECO:0007669"/>
    <property type="project" value="UniProtKB-KW"/>
</dbReference>
<dbReference type="GO" id="GO:0045892">
    <property type="term" value="P:negative regulation of DNA-templated transcription"/>
    <property type="evidence" value="ECO:0000250"/>
    <property type="project" value="UniProtKB"/>
</dbReference>
<dbReference type="GO" id="GO:0007175">
    <property type="term" value="P:negative regulation of epidermal growth factor-activated receptor activity"/>
    <property type="evidence" value="ECO:0000250"/>
    <property type="project" value="UniProtKB"/>
</dbReference>
<dbReference type="GO" id="GO:0000122">
    <property type="term" value="P:negative regulation of transcription by RNA polymerase II"/>
    <property type="evidence" value="ECO:0000318"/>
    <property type="project" value="GO_Central"/>
</dbReference>
<dbReference type="CDD" id="cd20384">
    <property type="entry name" value="Tudor_ZGPAT"/>
    <property type="match status" value="1"/>
</dbReference>
<dbReference type="FunFam" id="2.30.30.140:FF:000071">
    <property type="entry name" value="Zinc finger CCCH-type with G patch domain-containing protein"/>
    <property type="match status" value="1"/>
</dbReference>
<dbReference type="FunFam" id="2.30.30.1190:FF:000001">
    <property type="entry name" value="zinc finger CCCH-type with G patch domain-containing protein"/>
    <property type="match status" value="1"/>
</dbReference>
<dbReference type="Gene3D" id="2.30.30.1190">
    <property type="match status" value="1"/>
</dbReference>
<dbReference type="Gene3D" id="2.30.30.140">
    <property type="match status" value="1"/>
</dbReference>
<dbReference type="InterPro" id="IPR000467">
    <property type="entry name" value="G_patch_dom"/>
</dbReference>
<dbReference type="InterPro" id="IPR000571">
    <property type="entry name" value="Znf_CCCH"/>
</dbReference>
<dbReference type="InterPro" id="IPR036855">
    <property type="entry name" value="Znf_CCCH_sf"/>
</dbReference>
<dbReference type="PANTHER" id="PTHR46297">
    <property type="entry name" value="ZINC FINGER CCCH-TYPE WITH G PATCH DOMAIN-CONTAINING PROTEIN"/>
    <property type="match status" value="1"/>
</dbReference>
<dbReference type="PANTHER" id="PTHR46297:SF1">
    <property type="entry name" value="ZINC FINGER CCCH-TYPE WITH G PATCH DOMAIN-CONTAINING PROTEIN"/>
    <property type="match status" value="1"/>
</dbReference>
<dbReference type="Pfam" id="PF01585">
    <property type="entry name" value="G-patch"/>
    <property type="match status" value="1"/>
</dbReference>
<dbReference type="Pfam" id="PF00642">
    <property type="entry name" value="zf-CCCH"/>
    <property type="match status" value="1"/>
</dbReference>
<dbReference type="SMART" id="SM00443">
    <property type="entry name" value="G_patch"/>
    <property type="match status" value="1"/>
</dbReference>
<dbReference type="SMART" id="SM00356">
    <property type="entry name" value="ZnF_C3H1"/>
    <property type="match status" value="1"/>
</dbReference>
<dbReference type="SUPFAM" id="SSF90229">
    <property type="entry name" value="CCCH zinc finger"/>
    <property type="match status" value="1"/>
</dbReference>
<dbReference type="SUPFAM" id="SSF63748">
    <property type="entry name" value="Tudor/PWWP/MBT"/>
    <property type="match status" value="1"/>
</dbReference>
<dbReference type="PROSITE" id="PS50174">
    <property type="entry name" value="G_PATCH"/>
    <property type="match status" value="1"/>
</dbReference>
<dbReference type="PROSITE" id="PS50103">
    <property type="entry name" value="ZF_C3H1"/>
    <property type="match status" value="1"/>
</dbReference>
<gene>
    <name type="primary">ZGPAT</name>
</gene>
<organism>
    <name type="scientific">Bos taurus</name>
    <name type="common">Bovine</name>
    <dbReference type="NCBI Taxonomy" id="9913"/>
    <lineage>
        <taxon>Eukaryota</taxon>
        <taxon>Metazoa</taxon>
        <taxon>Chordata</taxon>
        <taxon>Craniata</taxon>
        <taxon>Vertebrata</taxon>
        <taxon>Euteleostomi</taxon>
        <taxon>Mammalia</taxon>
        <taxon>Eutheria</taxon>
        <taxon>Laurasiatheria</taxon>
        <taxon>Artiodactyla</taxon>
        <taxon>Ruminantia</taxon>
        <taxon>Pecora</taxon>
        <taxon>Bovidae</taxon>
        <taxon>Bovinae</taxon>
        <taxon>Bos</taxon>
    </lineage>
</organism>
<comment type="function">
    <text evidence="1">Transcription repressor that specifically binds the 5'-GGAG[GA]A[GA]A-3' consensus sequence. Represses transcription by recruiting the chromatin multiprotein complex NuRD to target promoters. Negatively regulates expression of EGFR, a gene involved in cell proliferation, survival and migration. Its ability to repress genes of the EGFR pathway suggest it may act as a tumor suppressor (By similarity).</text>
</comment>
<comment type="subunit">
    <text evidence="1">Interacts with CHD4/Mi-2; the interaction is direct.</text>
</comment>
<comment type="subcellular location">
    <subcellularLocation>
        <location evidence="1">Nucleus</location>
    </subcellularLocation>
</comment>
<evidence type="ECO:0000250" key="1"/>
<evidence type="ECO:0000250" key="2">
    <source>
        <dbReference type="UniProtKB" id="Q8N5A5"/>
    </source>
</evidence>
<evidence type="ECO:0000250" key="3">
    <source>
        <dbReference type="UniProtKB" id="Q8VDM1"/>
    </source>
</evidence>
<evidence type="ECO:0000255" key="4">
    <source>
        <dbReference type="PROSITE-ProRule" id="PRU00092"/>
    </source>
</evidence>
<evidence type="ECO:0000255" key="5">
    <source>
        <dbReference type="PROSITE-ProRule" id="PRU00723"/>
    </source>
</evidence>
<evidence type="ECO:0000256" key="6">
    <source>
        <dbReference type="SAM" id="MobiDB-lite"/>
    </source>
</evidence>
<reference key="1">
    <citation type="submission" date="2006-06" db="EMBL/GenBank/DDBJ databases">
        <authorList>
            <consortium name="NIH - Mammalian Gene Collection (MGC) project"/>
        </authorList>
    </citation>
    <scope>NUCLEOTIDE SEQUENCE [LARGE SCALE MRNA]</scope>
    <source>
        <strain>Hereford</strain>
        <tissue>Thymus</tissue>
    </source>
</reference>